<organism>
    <name type="scientific">Buchnera aphidicola subsp. Baizongia pistaciae (strain Bp)</name>
    <dbReference type="NCBI Taxonomy" id="224915"/>
    <lineage>
        <taxon>Bacteria</taxon>
        <taxon>Pseudomonadati</taxon>
        <taxon>Pseudomonadota</taxon>
        <taxon>Gammaproteobacteria</taxon>
        <taxon>Enterobacterales</taxon>
        <taxon>Erwiniaceae</taxon>
        <taxon>Buchnera</taxon>
    </lineage>
</organism>
<gene>
    <name evidence="1" type="primary">mnmE</name>
    <name evidence="1" type="synonym">thdF</name>
    <name evidence="1" type="synonym">trmE</name>
    <name type="ordered locus">bbp_017</name>
</gene>
<proteinExistence type="inferred from homology"/>
<feature type="chain" id="PRO_0000188858" description="tRNA modification GTPase MnmE">
    <location>
        <begin position="1"/>
        <end position="459"/>
    </location>
</feature>
<feature type="domain" description="TrmE-type G">
    <location>
        <begin position="219"/>
        <end position="379"/>
    </location>
</feature>
<feature type="binding site" evidence="1">
    <location>
        <position position="24"/>
    </location>
    <ligand>
        <name>(6S)-5-formyl-5,6,7,8-tetrahydrofolate</name>
        <dbReference type="ChEBI" id="CHEBI:57457"/>
    </ligand>
</feature>
<feature type="binding site" evidence="1">
    <location>
        <position position="82"/>
    </location>
    <ligand>
        <name>(6S)-5-formyl-5,6,7,8-tetrahydrofolate</name>
        <dbReference type="ChEBI" id="CHEBI:57457"/>
    </ligand>
</feature>
<feature type="binding site" evidence="1">
    <location>
        <position position="122"/>
    </location>
    <ligand>
        <name>(6S)-5-formyl-5,6,7,8-tetrahydrofolate</name>
        <dbReference type="ChEBI" id="CHEBI:57457"/>
    </ligand>
</feature>
<feature type="binding site" evidence="1">
    <location>
        <begin position="229"/>
        <end position="234"/>
    </location>
    <ligand>
        <name>GTP</name>
        <dbReference type="ChEBI" id="CHEBI:37565"/>
    </ligand>
</feature>
<feature type="binding site" evidence="1">
    <location>
        <position position="233"/>
    </location>
    <ligand>
        <name>Mg(2+)</name>
        <dbReference type="ChEBI" id="CHEBI:18420"/>
    </ligand>
</feature>
<feature type="binding site" evidence="1">
    <location>
        <begin position="248"/>
        <end position="254"/>
    </location>
    <ligand>
        <name>GTP</name>
        <dbReference type="ChEBI" id="CHEBI:37565"/>
    </ligand>
</feature>
<feature type="binding site" evidence="1">
    <location>
        <position position="254"/>
    </location>
    <ligand>
        <name>Mg(2+)</name>
        <dbReference type="ChEBI" id="CHEBI:18420"/>
    </ligand>
</feature>
<feature type="binding site" evidence="1">
    <location>
        <begin position="273"/>
        <end position="276"/>
    </location>
    <ligand>
        <name>GTP</name>
        <dbReference type="ChEBI" id="CHEBI:37565"/>
    </ligand>
</feature>
<feature type="binding site" evidence="1">
    <location>
        <position position="459"/>
    </location>
    <ligand>
        <name>(6S)-5-formyl-5,6,7,8-tetrahydrofolate</name>
        <dbReference type="ChEBI" id="CHEBI:57457"/>
    </ligand>
</feature>
<name>MNME_BUCBP</name>
<sequence>MNVFNDTIVSRVTSEGKSSVGIIRISGKLAFEVSIKVLNRDYLPIRTACYLSFLDLSGKIIDQGIVLWFPGPSSFTGEDVLELQGHGNPIIIDLLITTILSIPGIRLANPGEFSERAFLNGKIDLAQAESISDLINATSEQAARSAMQSLQGLFSIYINNLIKDFTKFRAKIEAQINFSDHEINADNLDVFIEHEINRIISRIKKIRNTAIQGSVLREGIKVVISGAPNSGKSSLLNALSLTNRAIVTNFPGTTRDVIYENIIINGVLFILIDTAGLRITNNPIENIGIERAWNEIKLAEHILFVIDGSRSVQNQLKNYNNFIKSLSKTSCITIVFNKSDLSKFKINSDLRNLNNGVLVSSKTGVGIEALRQHLYFSFKSSFEVNNSEGVVSARRRHINILSMVLEKFLSSKKDWKKINNIELLADDLRTCQDLLGGITGKITSDELLSEIFSEFCIGK</sequence>
<reference key="1">
    <citation type="journal article" date="2003" name="Proc. Natl. Acad. Sci. U.S.A.">
        <title>Reductive genome evolution in Buchnera aphidicola.</title>
        <authorList>
            <person name="van Ham R.C.H.J."/>
            <person name="Kamerbeek J."/>
            <person name="Palacios C."/>
            <person name="Rausell C."/>
            <person name="Abascal F."/>
            <person name="Bastolla U."/>
            <person name="Fernandez J.M."/>
            <person name="Jimenez L."/>
            <person name="Postigo M."/>
            <person name="Silva F.J."/>
            <person name="Tamames J."/>
            <person name="Viguera E."/>
            <person name="Latorre A."/>
            <person name="Valencia A."/>
            <person name="Moran F."/>
            <person name="Moya A."/>
        </authorList>
    </citation>
    <scope>NUCLEOTIDE SEQUENCE [LARGE SCALE GENOMIC DNA]</scope>
    <source>
        <strain>Bp</strain>
    </source>
</reference>
<accession>P59569</accession>
<protein>
    <recommendedName>
        <fullName evidence="1">tRNA modification GTPase MnmE</fullName>
        <ecNumber evidence="1">3.6.-.-</ecNumber>
    </recommendedName>
</protein>
<comment type="function">
    <text evidence="1">Exhibits a very high intrinsic GTPase hydrolysis rate. Involved in the addition of a carboxymethylaminomethyl (cmnm) group at the wobble position (U34) of certain tRNAs, forming tRNA-cmnm(5)s(2)U34.</text>
</comment>
<comment type="cofactor">
    <cofactor evidence="1">
        <name>K(+)</name>
        <dbReference type="ChEBI" id="CHEBI:29103"/>
    </cofactor>
    <text evidence="1">Binds 1 potassium ion per subunit.</text>
</comment>
<comment type="subunit">
    <text evidence="1">Homodimer. Heterotetramer of two MnmE and two MnmG subunits.</text>
</comment>
<comment type="subcellular location">
    <subcellularLocation>
        <location evidence="1">Cytoplasm</location>
    </subcellularLocation>
</comment>
<comment type="similarity">
    <text evidence="1">Belongs to the TRAFAC class TrmE-Era-EngA-EngB-Septin-like GTPase superfamily. TrmE GTPase family.</text>
</comment>
<dbReference type="EC" id="3.6.-.-" evidence="1"/>
<dbReference type="EMBL" id="AE016826">
    <property type="protein sequence ID" value="AAO26761.1"/>
    <property type="molecule type" value="Genomic_DNA"/>
</dbReference>
<dbReference type="RefSeq" id="WP_011091162.1">
    <property type="nucleotide sequence ID" value="NC_004545.1"/>
</dbReference>
<dbReference type="SMR" id="P59569"/>
<dbReference type="STRING" id="224915.bbp_017"/>
<dbReference type="KEGG" id="bab:bbp_017"/>
<dbReference type="eggNOG" id="COG0486">
    <property type="taxonomic scope" value="Bacteria"/>
</dbReference>
<dbReference type="HOGENOM" id="CLU_019624_4_1_6"/>
<dbReference type="OrthoDB" id="9805918at2"/>
<dbReference type="Proteomes" id="UP000000601">
    <property type="component" value="Chromosome"/>
</dbReference>
<dbReference type="GO" id="GO:0005829">
    <property type="term" value="C:cytosol"/>
    <property type="evidence" value="ECO:0007669"/>
    <property type="project" value="TreeGrafter"/>
</dbReference>
<dbReference type="GO" id="GO:0005525">
    <property type="term" value="F:GTP binding"/>
    <property type="evidence" value="ECO:0007669"/>
    <property type="project" value="UniProtKB-UniRule"/>
</dbReference>
<dbReference type="GO" id="GO:0003924">
    <property type="term" value="F:GTPase activity"/>
    <property type="evidence" value="ECO:0007669"/>
    <property type="project" value="UniProtKB-UniRule"/>
</dbReference>
<dbReference type="GO" id="GO:0046872">
    <property type="term" value="F:metal ion binding"/>
    <property type="evidence" value="ECO:0007669"/>
    <property type="project" value="UniProtKB-KW"/>
</dbReference>
<dbReference type="GO" id="GO:0030488">
    <property type="term" value="P:tRNA methylation"/>
    <property type="evidence" value="ECO:0007669"/>
    <property type="project" value="TreeGrafter"/>
</dbReference>
<dbReference type="GO" id="GO:0002098">
    <property type="term" value="P:tRNA wobble uridine modification"/>
    <property type="evidence" value="ECO:0007669"/>
    <property type="project" value="TreeGrafter"/>
</dbReference>
<dbReference type="CDD" id="cd04164">
    <property type="entry name" value="trmE"/>
    <property type="match status" value="1"/>
</dbReference>
<dbReference type="CDD" id="cd14858">
    <property type="entry name" value="TrmE_N"/>
    <property type="match status" value="1"/>
</dbReference>
<dbReference type="Gene3D" id="3.40.50.300">
    <property type="entry name" value="P-loop containing nucleotide triphosphate hydrolases"/>
    <property type="match status" value="1"/>
</dbReference>
<dbReference type="Gene3D" id="3.30.1360.120">
    <property type="entry name" value="Probable tRNA modification gtpase trme, domain 1"/>
    <property type="match status" value="1"/>
</dbReference>
<dbReference type="Gene3D" id="1.20.120.430">
    <property type="entry name" value="tRNA modification GTPase MnmE domain 2"/>
    <property type="match status" value="1"/>
</dbReference>
<dbReference type="HAMAP" id="MF_00379">
    <property type="entry name" value="GTPase_MnmE"/>
    <property type="match status" value="1"/>
</dbReference>
<dbReference type="InterPro" id="IPR031168">
    <property type="entry name" value="G_TrmE"/>
</dbReference>
<dbReference type="InterPro" id="IPR006073">
    <property type="entry name" value="GTP-bd"/>
</dbReference>
<dbReference type="InterPro" id="IPR018948">
    <property type="entry name" value="GTP-bd_TrmE_N"/>
</dbReference>
<dbReference type="InterPro" id="IPR004520">
    <property type="entry name" value="GTPase_MnmE"/>
</dbReference>
<dbReference type="InterPro" id="IPR027368">
    <property type="entry name" value="MnmE_dom2"/>
</dbReference>
<dbReference type="InterPro" id="IPR025867">
    <property type="entry name" value="MnmE_helical"/>
</dbReference>
<dbReference type="InterPro" id="IPR027417">
    <property type="entry name" value="P-loop_NTPase"/>
</dbReference>
<dbReference type="InterPro" id="IPR005225">
    <property type="entry name" value="Small_GTP-bd"/>
</dbReference>
<dbReference type="InterPro" id="IPR027266">
    <property type="entry name" value="TrmE/GcvT_dom1"/>
</dbReference>
<dbReference type="NCBIfam" id="TIGR00450">
    <property type="entry name" value="mnmE_trmE_thdF"/>
    <property type="match status" value="1"/>
</dbReference>
<dbReference type="NCBIfam" id="NF003661">
    <property type="entry name" value="PRK05291.1-3"/>
    <property type="match status" value="1"/>
</dbReference>
<dbReference type="NCBIfam" id="TIGR00231">
    <property type="entry name" value="small_GTP"/>
    <property type="match status" value="1"/>
</dbReference>
<dbReference type="PANTHER" id="PTHR42714">
    <property type="entry name" value="TRNA MODIFICATION GTPASE GTPBP3"/>
    <property type="match status" value="1"/>
</dbReference>
<dbReference type="PANTHER" id="PTHR42714:SF2">
    <property type="entry name" value="TRNA MODIFICATION GTPASE GTPBP3, MITOCHONDRIAL"/>
    <property type="match status" value="1"/>
</dbReference>
<dbReference type="Pfam" id="PF01926">
    <property type="entry name" value="MMR_HSR1"/>
    <property type="match status" value="1"/>
</dbReference>
<dbReference type="Pfam" id="PF12631">
    <property type="entry name" value="MnmE_helical"/>
    <property type="match status" value="1"/>
</dbReference>
<dbReference type="Pfam" id="PF10396">
    <property type="entry name" value="TrmE_N"/>
    <property type="match status" value="1"/>
</dbReference>
<dbReference type="SUPFAM" id="SSF52540">
    <property type="entry name" value="P-loop containing nucleoside triphosphate hydrolases"/>
    <property type="match status" value="1"/>
</dbReference>
<dbReference type="SUPFAM" id="SSF116878">
    <property type="entry name" value="TrmE connector domain"/>
    <property type="match status" value="1"/>
</dbReference>
<dbReference type="PROSITE" id="PS51709">
    <property type="entry name" value="G_TRME"/>
    <property type="match status" value="1"/>
</dbReference>
<evidence type="ECO:0000255" key="1">
    <source>
        <dbReference type="HAMAP-Rule" id="MF_00379"/>
    </source>
</evidence>
<keyword id="KW-0963">Cytoplasm</keyword>
<keyword id="KW-0342">GTP-binding</keyword>
<keyword id="KW-0378">Hydrolase</keyword>
<keyword id="KW-0460">Magnesium</keyword>
<keyword id="KW-0479">Metal-binding</keyword>
<keyword id="KW-0547">Nucleotide-binding</keyword>
<keyword id="KW-0630">Potassium</keyword>
<keyword id="KW-1185">Reference proteome</keyword>
<keyword id="KW-0819">tRNA processing</keyword>